<name>NUDC_STUS1</name>
<keyword id="KW-0378">Hydrolase</keyword>
<keyword id="KW-0460">Magnesium</keyword>
<keyword id="KW-0464">Manganese</keyword>
<keyword id="KW-0479">Metal-binding</keyword>
<keyword id="KW-0520">NAD</keyword>
<keyword id="KW-1185">Reference proteome</keyword>
<keyword id="KW-0862">Zinc</keyword>
<proteinExistence type="inferred from homology"/>
<reference key="1">
    <citation type="journal article" date="2008" name="Proc. Natl. Acad. Sci. U.S.A.">
        <title>Nitrogen fixation island and rhizosphere competence traits in the genome of root-associated Pseudomonas stutzeri A1501.</title>
        <authorList>
            <person name="Yan Y."/>
            <person name="Yang J."/>
            <person name="Dou Y."/>
            <person name="Chen M."/>
            <person name="Ping S."/>
            <person name="Peng J."/>
            <person name="Lu W."/>
            <person name="Zhang W."/>
            <person name="Yao Z."/>
            <person name="Li H."/>
            <person name="Liu W."/>
            <person name="He S."/>
            <person name="Geng L."/>
            <person name="Zhang X."/>
            <person name="Yang F."/>
            <person name="Yu H."/>
            <person name="Zhan Y."/>
            <person name="Li D."/>
            <person name="Lin Z."/>
            <person name="Wang Y."/>
            <person name="Elmerich C."/>
            <person name="Lin M."/>
            <person name="Jin Q."/>
        </authorList>
    </citation>
    <scope>NUCLEOTIDE SEQUENCE [LARGE SCALE GENOMIC DNA]</scope>
    <source>
        <strain>A1501</strain>
    </source>
</reference>
<accession>A4VLQ5</accession>
<protein>
    <recommendedName>
        <fullName evidence="1">NAD-capped RNA hydrolase NudC</fullName>
        <shortName evidence="1">DeNADding enzyme NudC</shortName>
        <ecNumber evidence="1">3.6.1.-</ecNumber>
    </recommendedName>
    <alternativeName>
        <fullName evidence="1">NADH pyrophosphatase</fullName>
        <ecNumber evidence="1">3.6.1.22</ecNumber>
    </alternativeName>
</protein>
<comment type="function">
    <text evidence="1">mRNA decapping enzyme that specifically removes the nicotinamide adenine dinucleotide (NAD) cap from a subset of mRNAs by hydrolyzing the diphosphate linkage to produce nicotinamide mononucleotide (NMN) and 5' monophosphate mRNA. The NAD-cap is present at the 5'-end of some mRNAs and stabilizes RNA against 5'-processing. Has preference for mRNAs with a 5'-end purine. Catalyzes the hydrolysis of a broad range of dinucleotide pyrophosphates.</text>
</comment>
<comment type="catalytic activity">
    <reaction evidence="1">
        <text>a 5'-end NAD(+)-phospho-ribonucleoside in mRNA + H2O = a 5'-end phospho-adenosine-phospho-ribonucleoside in mRNA + beta-nicotinamide D-ribonucleotide + 2 H(+)</text>
        <dbReference type="Rhea" id="RHEA:60876"/>
        <dbReference type="Rhea" id="RHEA-COMP:15698"/>
        <dbReference type="Rhea" id="RHEA-COMP:15719"/>
        <dbReference type="ChEBI" id="CHEBI:14649"/>
        <dbReference type="ChEBI" id="CHEBI:15377"/>
        <dbReference type="ChEBI" id="CHEBI:15378"/>
        <dbReference type="ChEBI" id="CHEBI:144029"/>
        <dbReference type="ChEBI" id="CHEBI:144051"/>
    </reaction>
    <physiologicalReaction direction="left-to-right" evidence="1">
        <dbReference type="Rhea" id="RHEA:60877"/>
    </physiologicalReaction>
</comment>
<comment type="catalytic activity">
    <reaction evidence="1">
        <text>NAD(+) + H2O = beta-nicotinamide D-ribonucleotide + AMP + 2 H(+)</text>
        <dbReference type="Rhea" id="RHEA:11800"/>
        <dbReference type="ChEBI" id="CHEBI:14649"/>
        <dbReference type="ChEBI" id="CHEBI:15377"/>
        <dbReference type="ChEBI" id="CHEBI:15378"/>
        <dbReference type="ChEBI" id="CHEBI:57540"/>
        <dbReference type="ChEBI" id="CHEBI:456215"/>
        <dbReference type="EC" id="3.6.1.22"/>
    </reaction>
</comment>
<comment type="catalytic activity">
    <reaction evidence="1">
        <text>NADH + H2O = reduced beta-nicotinamide D-ribonucleotide + AMP + 2 H(+)</text>
        <dbReference type="Rhea" id="RHEA:48868"/>
        <dbReference type="ChEBI" id="CHEBI:15377"/>
        <dbReference type="ChEBI" id="CHEBI:15378"/>
        <dbReference type="ChEBI" id="CHEBI:57945"/>
        <dbReference type="ChEBI" id="CHEBI:90832"/>
        <dbReference type="ChEBI" id="CHEBI:456215"/>
        <dbReference type="EC" id="3.6.1.22"/>
    </reaction>
</comment>
<comment type="cofactor">
    <cofactor evidence="1">
        <name>Mg(2+)</name>
        <dbReference type="ChEBI" id="CHEBI:18420"/>
    </cofactor>
    <cofactor evidence="1">
        <name>Mn(2+)</name>
        <dbReference type="ChEBI" id="CHEBI:29035"/>
    </cofactor>
    <text evidence="1">Divalent metal cations. Mg(2+) or Mn(2+).</text>
</comment>
<comment type="cofactor">
    <cofactor evidence="1">
        <name>Zn(2+)</name>
        <dbReference type="ChEBI" id="CHEBI:29105"/>
    </cofactor>
    <text evidence="1">Binds 1 zinc ion per subunit.</text>
</comment>
<comment type="subunit">
    <text evidence="1">Homodimer.</text>
</comment>
<comment type="similarity">
    <text evidence="1">Belongs to the Nudix hydrolase family. NudC subfamily.</text>
</comment>
<gene>
    <name evidence="1" type="primary">nudC</name>
    <name type="ordered locus">PST_2247</name>
</gene>
<organism>
    <name type="scientific">Stutzerimonas stutzeri (strain A1501)</name>
    <name type="common">Pseudomonas stutzeri</name>
    <dbReference type="NCBI Taxonomy" id="379731"/>
    <lineage>
        <taxon>Bacteria</taxon>
        <taxon>Pseudomonadati</taxon>
        <taxon>Pseudomonadota</taxon>
        <taxon>Gammaproteobacteria</taxon>
        <taxon>Pseudomonadales</taxon>
        <taxon>Pseudomonadaceae</taxon>
        <taxon>Stutzerimonas</taxon>
    </lineage>
</organism>
<feature type="chain" id="PRO_1000021914" description="NAD-capped RNA hydrolase NudC">
    <location>
        <begin position="1"/>
        <end position="276"/>
    </location>
</feature>
<feature type="domain" description="Nudix hydrolase" evidence="1">
    <location>
        <begin position="139"/>
        <end position="262"/>
    </location>
</feature>
<feature type="short sequence motif" description="Nudix box" evidence="1">
    <location>
        <begin position="173"/>
        <end position="194"/>
    </location>
</feature>
<feature type="binding site" evidence="1">
    <location>
        <position position="82"/>
    </location>
    <ligand>
        <name>substrate</name>
    </ligand>
</feature>
<feature type="binding site" evidence="1">
    <location>
        <position position="112"/>
    </location>
    <ligand>
        <name>Zn(2+)</name>
        <dbReference type="ChEBI" id="CHEBI:29105"/>
    </ligand>
</feature>
<feature type="binding site" evidence="1">
    <location>
        <position position="115"/>
    </location>
    <ligand>
        <name>Zn(2+)</name>
        <dbReference type="ChEBI" id="CHEBI:29105"/>
    </ligand>
</feature>
<feature type="binding site" evidence="1">
    <location>
        <position position="125"/>
    </location>
    <ligand>
        <name>substrate</name>
    </ligand>
</feature>
<feature type="binding site" evidence="1">
    <location>
        <position position="130"/>
    </location>
    <ligand>
        <name>Zn(2+)</name>
        <dbReference type="ChEBI" id="CHEBI:29105"/>
    </ligand>
</feature>
<feature type="binding site" evidence="1">
    <location>
        <position position="133"/>
    </location>
    <ligand>
        <name>Zn(2+)</name>
        <dbReference type="ChEBI" id="CHEBI:29105"/>
    </ligand>
</feature>
<feature type="binding site" evidence="1">
    <location>
        <position position="138"/>
    </location>
    <ligand>
        <name>substrate</name>
    </ligand>
</feature>
<feature type="binding site" evidence="1">
    <location>
        <position position="172"/>
    </location>
    <ligand>
        <name>a divalent metal cation</name>
        <dbReference type="ChEBI" id="CHEBI:60240"/>
        <label>1</label>
    </ligand>
</feature>
<feature type="binding site" evidence="1">
    <location>
        <position position="188"/>
    </location>
    <ligand>
        <name>a divalent metal cation</name>
        <dbReference type="ChEBI" id="CHEBI:60240"/>
        <label>2</label>
    </ligand>
</feature>
<feature type="binding site" evidence="1">
    <location>
        <position position="188"/>
    </location>
    <ligand>
        <name>a divalent metal cation</name>
        <dbReference type="ChEBI" id="CHEBI:60240"/>
        <label>3</label>
    </ligand>
</feature>
<feature type="binding site" evidence="1">
    <location>
        <position position="192"/>
    </location>
    <ligand>
        <name>a divalent metal cation</name>
        <dbReference type="ChEBI" id="CHEBI:60240"/>
        <label>1</label>
    </ligand>
</feature>
<feature type="binding site" evidence="1">
    <location>
        <position position="192"/>
    </location>
    <ligand>
        <name>a divalent metal cation</name>
        <dbReference type="ChEBI" id="CHEBI:60240"/>
        <label>3</label>
    </ligand>
</feature>
<feature type="binding site" evidence="1">
    <location>
        <begin position="206"/>
        <end position="213"/>
    </location>
    <ligand>
        <name>substrate</name>
    </ligand>
</feature>
<feature type="binding site" evidence="1">
    <location>
        <position position="233"/>
    </location>
    <ligand>
        <name>a divalent metal cation</name>
        <dbReference type="ChEBI" id="CHEBI:60240"/>
        <label>1</label>
    </ligand>
</feature>
<feature type="binding site" evidence="1">
    <location>
        <position position="233"/>
    </location>
    <ligand>
        <name>a divalent metal cation</name>
        <dbReference type="ChEBI" id="CHEBI:60240"/>
        <label>3</label>
    </ligand>
</feature>
<feature type="binding site" evidence="1">
    <location>
        <position position="255"/>
    </location>
    <ligand>
        <name>substrate</name>
    </ligand>
</feature>
<evidence type="ECO:0000255" key="1">
    <source>
        <dbReference type="HAMAP-Rule" id="MF_00297"/>
    </source>
</evidence>
<sequence length="276" mass="30908">MSLRWQAALLDPSLAGGWAVVHCRQQFLVDDSGVLFPRDWLKRLELPLLSEQGLGHFDGEPVFLFELDVPADVPGARWQGLRQFMQQVDPDLFRLLGYATQIGTWVSQHRFCGSCGSPMHARAGERAMYCPACGVQHYPRLSPSMIVLVTRGDELLLARSPRFAPGVYSTLAGYVEPGESVEQCVAREVREEVGVDIHPPQYIASQGWPFPHSLMLGFHAEYAGGEIVPQPEEIEDARWFHIDNLPALPARQSIARYLIELYLARRLGRPEPVLPG</sequence>
<dbReference type="EC" id="3.6.1.-" evidence="1"/>
<dbReference type="EC" id="3.6.1.22" evidence="1"/>
<dbReference type="EMBL" id="CP000304">
    <property type="protein sequence ID" value="ABP79906.1"/>
    <property type="molecule type" value="Genomic_DNA"/>
</dbReference>
<dbReference type="RefSeq" id="WP_011913373.1">
    <property type="nucleotide sequence ID" value="NC_009434.1"/>
</dbReference>
<dbReference type="SMR" id="A4VLQ5"/>
<dbReference type="KEGG" id="psa:PST_2247"/>
<dbReference type="eggNOG" id="COG2816">
    <property type="taxonomic scope" value="Bacteria"/>
</dbReference>
<dbReference type="HOGENOM" id="CLU_037162_0_1_6"/>
<dbReference type="Proteomes" id="UP000000233">
    <property type="component" value="Chromosome"/>
</dbReference>
<dbReference type="GO" id="GO:0005829">
    <property type="term" value="C:cytosol"/>
    <property type="evidence" value="ECO:0007669"/>
    <property type="project" value="TreeGrafter"/>
</dbReference>
<dbReference type="GO" id="GO:0000287">
    <property type="term" value="F:magnesium ion binding"/>
    <property type="evidence" value="ECO:0007669"/>
    <property type="project" value="UniProtKB-UniRule"/>
</dbReference>
<dbReference type="GO" id="GO:0030145">
    <property type="term" value="F:manganese ion binding"/>
    <property type="evidence" value="ECO:0007669"/>
    <property type="project" value="UniProtKB-UniRule"/>
</dbReference>
<dbReference type="GO" id="GO:0000210">
    <property type="term" value="F:NAD+ diphosphatase activity"/>
    <property type="evidence" value="ECO:0007669"/>
    <property type="project" value="UniProtKB-UniRule"/>
</dbReference>
<dbReference type="GO" id="GO:0035529">
    <property type="term" value="F:NADH pyrophosphatase activity"/>
    <property type="evidence" value="ECO:0007669"/>
    <property type="project" value="TreeGrafter"/>
</dbReference>
<dbReference type="GO" id="GO:0110153">
    <property type="term" value="F:RNA NAD-cap (NMN-forming) hydrolase activity"/>
    <property type="evidence" value="ECO:0007669"/>
    <property type="project" value="RHEA"/>
</dbReference>
<dbReference type="GO" id="GO:0008270">
    <property type="term" value="F:zinc ion binding"/>
    <property type="evidence" value="ECO:0007669"/>
    <property type="project" value="UniProtKB-UniRule"/>
</dbReference>
<dbReference type="GO" id="GO:0019677">
    <property type="term" value="P:NAD catabolic process"/>
    <property type="evidence" value="ECO:0007669"/>
    <property type="project" value="TreeGrafter"/>
</dbReference>
<dbReference type="GO" id="GO:0006734">
    <property type="term" value="P:NADH metabolic process"/>
    <property type="evidence" value="ECO:0007669"/>
    <property type="project" value="TreeGrafter"/>
</dbReference>
<dbReference type="GO" id="GO:0006742">
    <property type="term" value="P:NADP catabolic process"/>
    <property type="evidence" value="ECO:0007669"/>
    <property type="project" value="TreeGrafter"/>
</dbReference>
<dbReference type="CDD" id="cd03429">
    <property type="entry name" value="NUDIX_NADH_pyrophosphatase_Nudt13"/>
    <property type="match status" value="1"/>
</dbReference>
<dbReference type="Gene3D" id="3.90.79.20">
    <property type="match status" value="1"/>
</dbReference>
<dbReference type="Gene3D" id="3.90.79.10">
    <property type="entry name" value="Nucleoside Triphosphate Pyrophosphohydrolase"/>
    <property type="match status" value="1"/>
</dbReference>
<dbReference type="HAMAP" id="MF_00297">
    <property type="entry name" value="Nudix_NudC"/>
    <property type="match status" value="1"/>
</dbReference>
<dbReference type="InterPro" id="IPR050241">
    <property type="entry name" value="NAD-cap_RNA_hydrolase_NudC"/>
</dbReference>
<dbReference type="InterPro" id="IPR015375">
    <property type="entry name" value="NADH_PPase-like_N"/>
</dbReference>
<dbReference type="InterPro" id="IPR049734">
    <property type="entry name" value="NudC-like_C"/>
</dbReference>
<dbReference type="InterPro" id="IPR015797">
    <property type="entry name" value="NUDIX_hydrolase-like_dom_sf"/>
</dbReference>
<dbReference type="InterPro" id="IPR020084">
    <property type="entry name" value="NUDIX_hydrolase_CS"/>
</dbReference>
<dbReference type="InterPro" id="IPR000086">
    <property type="entry name" value="NUDIX_hydrolase_dom"/>
</dbReference>
<dbReference type="InterPro" id="IPR022925">
    <property type="entry name" value="RNA_Hydrolase_NudC"/>
</dbReference>
<dbReference type="InterPro" id="IPR015376">
    <property type="entry name" value="Znr_NADH_PPase"/>
</dbReference>
<dbReference type="NCBIfam" id="NF001299">
    <property type="entry name" value="PRK00241.1"/>
    <property type="match status" value="1"/>
</dbReference>
<dbReference type="PANTHER" id="PTHR42904:SF6">
    <property type="entry name" value="NAD-CAPPED RNA HYDROLASE NUDT12"/>
    <property type="match status" value="1"/>
</dbReference>
<dbReference type="PANTHER" id="PTHR42904">
    <property type="entry name" value="NUDIX HYDROLASE, NUDC SUBFAMILY"/>
    <property type="match status" value="1"/>
</dbReference>
<dbReference type="Pfam" id="PF00293">
    <property type="entry name" value="NUDIX"/>
    <property type="match status" value="1"/>
</dbReference>
<dbReference type="Pfam" id="PF09296">
    <property type="entry name" value="NUDIX-like"/>
    <property type="match status" value="1"/>
</dbReference>
<dbReference type="Pfam" id="PF09297">
    <property type="entry name" value="Zn_ribbon_NUD"/>
    <property type="match status" value="1"/>
</dbReference>
<dbReference type="SUPFAM" id="SSF55811">
    <property type="entry name" value="Nudix"/>
    <property type="match status" value="2"/>
</dbReference>
<dbReference type="PROSITE" id="PS51462">
    <property type="entry name" value="NUDIX"/>
    <property type="match status" value="1"/>
</dbReference>
<dbReference type="PROSITE" id="PS00893">
    <property type="entry name" value="NUDIX_BOX"/>
    <property type="match status" value="1"/>
</dbReference>